<evidence type="ECO:0000255" key="1">
    <source>
        <dbReference type="HAMAP-Rule" id="MF_01365"/>
    </source>
</evidence>
<evidence type="ECO:0000305" key="2"/>
<keyword id="KW-0687">Ribonucleoprotein</keyword>
<keyword id="KW-0689">Ribosomal protein</keyword>
<keyword id="KW-0694">RNA-binding</keyword>
<keyword id="KW-0699">rRNA-binding</keyword>
<accession>A3M969</accession>
<reference key="1">
    <citation type="journal article" date="2007" name="Genes Dev.">
        <title>New insights into Acinetobacter baumannii pathogenesis revealed by high-density pyrosequencing and transposon mutagenesis.</title>
        <authorList>
            <person name="Smith M.G."/>
            <person name="Gianoulis T.A."/>
            <person name="Pukatzki S."/>
            <person name="Mekalanos J.J."/>
            <person name="Ornston L.N."/>
            <person name="Gerstein M."/>
            <person name="Snyder M."/>
        </authorList>
    </citation>
    <scope>NUCLEOTIDE SEQUENCE [LARGE SCALE GENOMIC DNA]</scope>
    <source>
        <strain>ATCC 17978 / DSM 105126 / CIP 53.77 / LMG 1025 / NCDC KC755 / 5377</strain>
    </source>
</reference>
<protein>
    <recommendedName>
        <fullName evidence="1">Large ribosomal subunit protein uL6</fullName>
    </recommendedName>
    <alternativeName>
        <fullName evidence="2">50S ribosomal protein L6</fullName>
    </alternativeName>
</protein>
<name>RL6_ACIBT</name>
<gene>
    <name evidence="1" type="primary">rplF</name>
    <name type="ordered locus">A1S_3066</name>
</gene>
<comment type="function">
    <text evidence="1">This protein binds to the 23S rRNA, and is important in its secondary structure. It is located near the subunit interface in the base of the L7/L12 stalk, and near the tRNA binding site of the peptidyltransferase center.</text>
</comment>
<comment type="subunit">
    <text evidence="1">Part of the 50S ribosomal subunit.</text>
</comment>
<comment type="similarity">
    <text evidence="1">Belongs to the universal ribosomal protein uL6 family.</text>
</comment>
<feature type="chain" id="PRO_1000143932" description="Large ribosomal subunit protein uL6">
    <location>
        <begin position="1"/>
        <end position="177"/>
    </location>
</feature>
<sequence>MSRVAKAPVTVPNGVTVTQNGRQVEVKGSKGTLSFNLHALVELKQEEGKLQLAPAKESKDAWMQAGTARAVLNNLVKGVSEGFERKLQLVGVGYKAAVKGTVVNLNLGYSHPIDYALPEGVTAETPTATEIILKSANKQLLGQVAAEIRAYRSPEPYKGKGVRYSDEVILRKEAKKK</sequence>
<dbReference type="EMBL" id="CP000521">
    <property type="protein sequence ID" value="ABO13463.2"/>
    <property type="molecule type" value="Genomic_DNA"/>
</dbReference>
<dbReference type="RefSeq" id="WP_000091932.1">
    <property type="nucleotide sequence ID" value="NZ_CP053098.1"/>
</dbReference>
<dbReference type="SMR" id="A3M969"/>
<dbReference type="GeneID" id="92895302"/>
<dbReference type="KEGG" id="acb:A1S_3066"/>
<dbReference type="HOGENOM" id="CLU_065464_1_2_6"/>
<dbReference type="GO" id="GO:0022625">
    <property type="term" value="C:cytosolic large ribosomal subunit"/>
    <property type="evidence" value="ECO:0007669"/>
    <property type="project" value="TreeGrafter"/>
</dbReference>
<dbReference type="GO" id="GO:0019843">
    <property type="term" value="F:rRNA binding"/>
    <property type="evidence" value="ECO:0007669"/>
    <property type="project" value="UniProtKB-UniRule"/>
</dbReference>
<dbReference type="GO" id="GO:0003735">
    <property type="term" value="F:structural constituent of ribosome"/>
    <property type="evidence" value="ECO:0007669"/>
    <property type="project" value="InterPro"/>
</dbReference>
<dbReference type="GO" id="GO:0002181">
    <property type="term" value="P:cytoplasmic translation"/>
    <property type="evidence" value="ECO:0007669"/>
    <property type="project" value="TreeGrafter"/>
</dbReference>
<dbReference type="FunFam" id="3.90.930.12:FF:000001">
    <property type="entry name" value="50S ribosomal protein L6"/>
    <property type="match status" value="1"/>
</dbReference>
<dbReference type="FunFam" id="3.90.930.12:FF:000002">
    <property type="entry name" value="50S ribosomal protein L6"/>
    <property type="match status" value="1"/>
</dbReference>
<dbReference type="Gene3D" id="3.90.930.12">
    <property type="entry name" value="Ribosomal protein L6, alpha-beta domain"/>
    <property type="match status" value="2"/>
</dbReference>
<dbReference type="HAMAP" id="MF_01365_B">
    <property type="entry name" value="Ribosomal_uL6_B"/>
    <property type="match status" value="1"/>
</dbReference>
<dbReference type="InterPro" id="IPR000702">
    <property type="entry name" value="Ribosomal_uL6-like"/>
</dbReference>
<dbReference type="InterPro" id="IPR036789">
    <property type="entry name" value="Ribosomal_uL6-like_a/b-dom_sf"/>
</dbReference>
<dbReference type="InterPro" id="IPR020040">
    <property type="entry name" value="Ribosomal_uL6_a/b-dom"/>
</dbReference>
<dbReference type="InterPro" id="IPR019906">
    <property type="entry name" value="Ribosomal_uL6_bac-type"/>
</dbReference>
<dbReference type="InterPro" id="IPR002358">
    <property type="entry name" value="Ribosomal_uL6_CS"/>
</dbReference>
<dbReference type="NCBIfam" id="TIGR03654">
    <property type="entry name" value="L6_bact"/>
    <property type="match status" value="1"/>
</dbReference>
<dbReference type="PANTHER" id="PTHR11655">
    <property type="entry name" value="60S/50S RIBOSOMAL PROTEIN L6/L9"/>
    <property type="match status" value="1"/>
</dbReference>
<dbReference type="PANTHER" id="PTHR11655:SF14">
    <property type="entry name" value="LARGE RIBOSOMAL SUBUNIT PROTEIN UL6M"/>
    <property type="match status" value="1"/>
</dbReference>
<dbReference type="Pfam" id="PF00347">
    <property type="entry name" value="Ribosomal_L6"/>
    <property type="match status" value="2"/>
</dbReference>
<dbReference type="PIRSF" id="PIRSF002162">
    <property type="entry name" value="Ribosomal_L6"/>
    <property type="match status" value="1"/>
</dbReference>
<dbReference type="PRINTS" id="PR00059">
    <property type="entry name" value="RIBOSOMALL6"/>
</dbReference>
<dbReference type="SUPFAM" id="SSF56053">
    <property type="entry name" value="Ribosomal protein L6"/>
    <property type="match status" value="2"/>
</dbReference>
<dbReference type="PROSITE" id="PS00525">
    <property type="entry name" value="RIBOSOMAL_L6_1"/>
    <property type="match status" value="1"/>
</dbReference>
<organism>
    <name type="scientific">Acinetobacter baumannii (strain ATCC 17978 / DSM 105126 / CIP 53.77 / LMG 1025 / NCDC KC755 / 5377)</name>
    <dbReference type="NCBI Taxonomy" id="400667"/>
    <lineage>
        <taxon>Bacteria</taxon>
        <taxon>Pseudomonadati</taxon>
        <taxon>Pseudomonadota</taxon>
        <taxon>Gammaproteobacteria</taxon>
        <taxon>Moraxellales</taxon>
        <taxon>Moraxellaceae</taxon>
        <taxon>Acinetobacter</taxon>
        <taxon>Acinetobacter calcoaceticus/baumannii complex</taxon>
    </lineage>
</organism>
<proteinExistence type="inferred from homology"/>